<name>TRMFO_RHOPA</name>
<protein>
    <recommendedName>
        <fullName evidence="1">Methylenetetrahydrofolate--tRNA-(uracil-5-)-methyltransferase TrmFO</fullName>
        <ecNumber evidence="1">2.1.1.74</ecNumber>
    </recommendedName>
    <alternativeName>
        <fullName evidence="1">Folate-dependent tRNA (uracil-5-)-methyltransferase</fullName>
    </alternativeName>
    <alternativeName>
        <fullName evidence="1">Folate-dependent tRNA(M-5-U54)-methyltransferase</fullName>
    </alternativeName>
</protein>
<keyword id="KW-0963">Cytoplasm</keyword>
<keyword id="KW-0274">FAD</keyword>
<keyword id="KW-0285">Flavoprotein</keyword>
<keyword id="KW-0489">Methyltransferase</keyword>
<keyword id="KW-0520">NAD</keyword>
<keyword id="KW-0521">NADP</keyword>
<keyword id="KW-0808">Transferase</keyword>
<keyword id="KW-0819">tRNA processing</keyword>
<evidence type="ECO:0000255" key="1">
    <source>
        <dbReference type="HAMAP-Rule" id="MF_01037"/>
    </source>
</evidence>
<evidence type="ECO:0000256" key="2">
    <source>
        <dbReference type="SAM" id="MobiDB-lite"/>
    </source>
</evidence>
<dbReference type="EC" id="2.1.1.74" evidence="1"/>
<dbReference type="EMBL" id="BX572602">
    <property type="protein sequence ID" value="CAE28269.1"/>
    <property type="molecule type" value="Genomic_DNA"/>
</dbReference>
<dbReference type="RefSeq" id="WP_011158378.1">
    <property type="nucleotide sequence ID" value="NZ_CP116810.1"/>
</dbReference>
<dbReference type="SMR" id="Q6N5Z1"/>
<dbReference type="STRING" id="258594.RPA2827"/>
<dbReference type="GeneID" id="66893905"/>
<dbReference type="eggNOG" id="COG1206">
    <property type="taxonomic scope" value="Bacteria"/>
</dbReference>
<dbReference type="HOGENOM" id="CLU_033057_1_0_5"/>
<dbReference type="PhylomeDB" id="Q6N5Z1"/>
<dbReference type="GO" id="GO:0005829">
    <property type="term" value="C:cytosol"/>
    <property type="evidence" value="ECO:0007669"/>
    <property type="project" value="TreeGrafter"/>
</dbReference>
<dbReference type="GO" id="GO:0050660">
    <property type="term" value="F:flavin adenine dinucleotide binding"/>
    <property type="evidence" value="ECO:0007669"/>
    <property type="project" value="UniProtKB-UniRule"/>
</dbReference>
<dbReference type="GO" id="GO:0047151">
    <property type="term" value="F:tRNA (uracil(54)-C5)-methyltransferase activity, 5,10-methylenetetrahydrofolate-dependent"/>
    <property type="evidence" value="ECO:0007669"/>
    <property type="project" value="UniProtKB-UniRule"/>
</dbReference>
<dbReference type="GO" id="GO:0030488">
    <property type="term" value="P:tRNA methylation"/>
    <property type="evidence" value="ECO:0007669"/>
    <property type="project" value="TreeGrafter"/>
</dbReference>
<dbReference type="GO" id="GO:0002098">
    <property type="term" value="P:tRNA wobble uridine modification"/>
    <property type="evidence" value="ECO:0007669"/>
    <property type="project" value="TreeGrafter"/>
</dbReference>
<dbReference type="FunFam" id="3.50.50.60:FF:000359">
    <property type="entry name" value="Methylenetetrahydrofolate--tRNA-(uracil-5-)-methyltransferase TrmFO"/>
    <property type="match status" value="1"/>
</dbReference>
<dbReference type="Gene3D" id="3.50.50.60">
    <property type="entry name" value="FAD/NAD(P)-binding domain"/>
    <property type="match status" value="2"/>
</dbReference>
<dbReference type="HAMAP" id="MF_01037">
    <property type="entry name" value="TrmFO"/>
    <property type="match status" value="1"/>
</dbReference>
<dbReference type="InterPro" id="IPR036188">
    <property type="entry name" value="FAD/NAD-bd_sf"/>
</dbReference>
<dbReference type="InterPro" id="IPR002218">
    <property type="entry name" value="MnmG-rel"/>
</dbReference>
<dbReference type="InterPro" id="IPR020595">
    <property type="entry name" value="MnmG-rel_CS"/>
</dbReference>
<dbReference type="InterPro" id="IPR040131">
    <property type="entry name" value="MnmG_N"/>
</dbReference>
<dbReference type="InterPro" id="IPR004417">
    <property type="entry name" value="TrmFO"/>
</dbReference>
<dbReference type="NCBIfam" id="TIGR00137">
    <property type="entry name" value="gid_trmFO"/>
    <property type="match status" value="1"/>
</dbReference>
<dbReference type="NCBIfam" id="NF003739">
    <property type="entry name" value="PRK05335.1"/>
    <property type="match status" value="1"/>
</dbReference>
<dbReference type="PANTHER" id="PTHR11806">
    <property type="entry name" value="GLUCOSE INHIBITED DIVISION PROTEIN A"/>
    <property type="match status" value="1"/>
</dbReference>
<dbReference type="PANTHER" id="PTHR11806:SF2">
    <property type="entry name" value="METHYLENETETRAHYDROFOLATE--TRNA-(URACIL-5-)-METHYLTRANSFERASE TRMFO"/>
    <property type="match status" value="1"/>
</dbReference>
<dbReference type="Pfam" id="PF01134">
    <property type="entry name" value="GIDA"/>
    <property type="match status" value="1"/>
</dbReference>
<dbReference type="SUPFAM" id="SSF51905">
    <property type="entry name" value="FAD/NAD(P)-binding domain"/>
    <property type="match status" value="1"/>
</dbReference>
<dbReference type="PROSITE" id="PS01281">
    <property type="entry name" value="GIDA_2"/>
    <property type="match status" value="1"/>
</dbReference>
<organism>
    <name type="scientific">Rhodopseudomonas palustris (strain ATCC BAA-98 / CGA009)</name>
    <dbReference type="NCBI Taxonomy" id="258594"/>
    <lineage>
        <taxon>Bacteria</taxon>
        <taxon>Pseudomonadati</taxon>
        <taxon>Pseudomonadota</taxon>
        <taxon>Alphaproteobacteria</taxon>
        <taxon>Hyphomicrobiales</taxon>
        <taxon>Nitrobacteraceae</taxon>
        <taxon>Rhodopseudomonas</taxon>
    </lineage>
</organism>
<comment type="function">
    <text evidence="1">Catalyzes the folate-dependent formation of 5-methyl-uridine at position 54 (M-5-U54) in all tRNAs.</text>
</comment>
<comment type="catalytic activity">
    <reaction evidence="1">
        <text>uridine(54) in tRNA + (6R)-5,10-methylene-5,6,7,8-tetrahydrofolate + NADH + H(+) = 5-methyluridine(54) in tRNA + (6S)-5,6,7,8-tetrahydrofolate + NAD(+)</text>
        <dbReference type="Rhea" id="RHEA:16873"/>
        <dbReference type="Rhea" id="RHEA-COMP:10167"/>
        <dbReference type="Rhea" id="RHEA-COMP:10193"/>
        <dbReference type="ChEBI" id="CHEBI:15378"/>
        <dbReference type="ChEBI" id="CHEBI:15636"/>
        <dbReference type="ChEBI" id="CHEBI:57453"/>
        <dbReference type="ChEBI" id="CHEBI:57540"/>
        <dbReference type="ChEBI" id="CHEBI:57945"/>
        <dbReference type="ChEBI" id="CHEBI:65315"/>
        <dbReference type="ChEBI" id="CHEBI:74447"/>
        <dbReference type="EC" id="2.1.1.74"/>
    </reaction>
</comment>
<comment type="catalytic activity">
    <reaction evidence="1">
        <text>uridine(54) in tRNA + (6R)-5,10-methylene-5,6,7,8-tetrahydrofolate + NADPH + H(+) = 5-methyluridine(54) in tRNA + (6S)-5,6,7,8-tetrahydrofolate + NADP(+)</text>
        <dbReference type="Rhea" id="RHEA:62372"/>
        <dbReference type="Rhea" id="RHEA-COMP:10167"/>
        <dbReference type="Rhea" id="RHEA-COMP:10193"/>
        <dbReference type="ChEBI" id="CHEBI:15378"/>
        <dbReference type="ChEBI" id="CHEBI:15636"/>
        <dbReference type="ChEBI" id="CHEBI:57453"/>
        <dbReference type="ChEBI" id="CHEBI:57783"/>
        <dbReference type="ChEBI" id="CHEBI:58349"/>
        <dbReference type="ChEBI" id="CHEBI:65315"/>
        <dbReference type="ChEBI" id="CHEBI:74447"/>
        <dbReference type="EC" id="2.1.1.74"/>
    </reaction>
</comment>
<comment type="cofactor">
    <cofactor evidence="1">
        <name>FAD</name>
        <dbReference type="ChEBI" id="CHEBI:57692"/>
    </cofactor>
</comment>
<comment type="subcellular location">
    <subcellularLocation>
        <location evidence="1">Cytoplasm</location>
    </subcellularLocation>
</comment>
<comment type="similarity">
    <text evidence="1">Belongs to the MnmG family. TrmFO subfamily.</text>
</comment>
<feature type="chain" id="PRO_0000117257" description="Methylenetetrahydrofolate--tRNA-(uracil-5-)-methyltransferase TrmFO">
    <location>
        <begin position="1"/>
        <end position="478"/>
    </location>
</feature>
<feature type="region of interest" description="Disordered" evidence="2">
    <location>
        <begin position="429"/>
        <end position="448"/>
    </location>
</feature>
<feature type="compositionally biased region" description="Basic and acidic residues" evidence="2">
    <location>
        <begin position="438"/>
        <end position="448"/>
    </location>
</feature>
<feature type="binding site" evidence="1">
    <location>
        <begin position="16"/>
        <end position="21"/>
    </location>
    <ligand>
        <name>FAD</name>
        <dbReference type="ChEBI" id="CHEBI:57692"/>
    </ligand>
</feature>
<sequence>MTSRTAPASPVVHVIGAGLAGSEAAWQIARAGVRVVLHEMRPVRTTEAHKTDGLAELVCSNSFRSDDAANNAVGLLHAEMRRLGSLIMQAADANQVPAGGALAVDRDGFSAAVTKALAEHPLIEICREEIDGLPPQEWTNVVIATGPLTSAPLADAIRGLTDESALAFFDAIAPIVHRDSIDMSVAWFQSRYDKVGPGGTGADYLNCPMTREQYDAFVDALIEGEKVDFKDWEKDTPYFDGCLPIEVMAERGRETLRHGPMKPVGLTNPHNPTVKPYAIVQLRQDNKLGTLYNMVGFQTKLKHGAQLRVFRTIPGLENAEFARLGGLHRNTFLNSPKLLDESLRLRASPRLRFAGQMTGCEGYVESASIGLFAGLAAAADLVGQSLAPPPPTTALGALLGHITGGHIETIDAGPRSFQPMNINFGLFPPLANPPTKGPDGKRLRGPEKSVAKKQALSARALADIDAWIAAHLKLPKAA</sequence>
<accession>Q6N5Z1</accession>
<proteinExistence type="inferred from homology"/>
<gene>
    <name evidence="1" type="primary">trmFO</name>
    <name type="synonym">gid</name>
    <name type="ordered locus">RPA2827</name>
</gene>
<reference key="1">
    <citation type="journal article" date="2004" name="Nat. Biotechnol.">
        <title>Complete genome sequence of the metabolically versatile photosynthetic bacterium Rhodopseudomonas palustris.</title>
        <authorList>
            <person name="Larimer F.W."/>
            <person name="Chain P."/>
            <person name="Hauser L."/>
            <person name="Lamerdin J.E."/>
            <person name="Malfatti S."/>
            <person name="Do L."/>
            <person name="Land M.L."/>
            <person name="Pelletier D.A."/>
            <person name="Beatty J.T."/>
            <person name="Lang A.S."/>
            <person name="Tabita F.R."/>
            <person name="Gibson J.L."/>
            <person name="Hanson T.E."/>
            <person name="Bobst C."/>
            <person name="Torres y Torres J.L."/>
            <person name="Peres C."/>
            <person name="Harrison F.H."/>
            <person name="Gibson J."/>
            <person name="Harwood C.S."/>
        </authorList>
    </citation>
    <scope>NUCLEOTIDE SEQUENCE [LARGE SCALE GENOMIC DNA]</scope>
    <source>
        <strain>ATCC BAA-98 / CGA009</strain>
    </source>
</reference>